<dbReference type="EMBL" id="CP000880">
    <property type="protein sequence ID" value="ABX21336.1"/>
    <property type="status" value="ALT_INIT"/>
    <property type="molecule type" value="Genomic_DNA"/>
</dbReference>
<dbReference type="STRING" id="41514.SARI_01439"/>
<dbReference type="KEGG" id="ses:SARI_01439"/>
<dbReference type="HOGENOM" id="CLU_167574_0_0_6"/>
<dbReference type="Proteomes" id="UP000002084">
    <property type="component" value="Chromosome"/>
</dbReference>
<dbReference type="HAMAP" id="MF_01581">
    <property type="entry name" value="UPF0482"/>
    <property type="match status" value="1"/>
</dbReference>
<dbReference type="InterPro" id="IPR009700">
    <property type="entry name" value="DUF1283"/>
</dbReference>
<dbReference type="NCBIfam" id="NF010180">
    <property type="entry name" value="PRK13659.1"/>
    <property type="match status" value="1"/>
</dbReference>
<dbReference type="Pfam" id="PF06932">
    <property type="entry name" value="DUF1283"/>
    <property type="match status" value="1"/>
</dbReference>
<proteinExistence type="inferred from homology"/>
<comment type="similarity">
    <text evidence="1">Belongs to the UPF0482 family.</text>
</comment>
<comment type="sequence caution" evidence="2">
    <conflict type="erroneous initiation">
        <sequence resource="EMBL-CDS" id="ABX21336"/>
    </conflict>
</comment>
<evidence type="ECO:0000255" key="1">
    <source>
        <dbReference type="HAMAP-Rule" id="MF_01581"/>
    </source>
</evidence>
<evidence type="ECO:0000305" key="2"/>
<name>YNFB_SALAR</name>
<gene>
    <name evidence="1" type="primary">ynfB</name>
    <name type="ordered locus">SARI_01439</name>
</gene>
<keyword id="KW-1185">Reference proteome</keyword>
<keyword id="KW-0732">Signal</keyword>
<protein>
    <recommendedName>
        <fullName evidence="1">UPF0482 protein YnfB</fullName>
    </recommendedName>
</protein>
<reference key="1">
    <citation type="submission" date="2007-11" db="EMBL/GenBank/DDBJ databases">
        <authorList>
            <consortium name="The Salmonella enterica serovar Arizonae Genome Sequencing Project"/>
            <person name="McClelland M."/>
            <person name="Sanderson E.K."/>
            <person name="Porwollik S."/>
            <person name="Spieth J."/>
            <person name="Clifton W.S."/>
            <person name="Fulton R."/>
            <person name="Chunyan W."/>
            <person name="Wollam A."/>
            <person name="Shah N."/>
            <person name="Pepin K."/>
            <person name="Bhonagiri V."/>
            <person name="Nash W."/>
            <person name="Johnson M."/>
            <person name="Thiruvilangam P."/>
            <person name="Wilson R."/>
        </authorList>
    </citation>
    <scope>NUCLEOTIDE SEQUENCE [LARGE SCALE GENOMIC DNA]</scope>
    <source>
        <strain>ATCC BAA-731 / CDC346-86 / RSK2980</strain>
    </source>
</reference>
<organism>
    <name type="scientific">Salmonella arizonae (strain ATCC BAA-731 / CDC346-86 / RSK2980)</name>
    <dbReference type="NCBI Taxonomy" id="41514"/>
    <lineage>
        <taxon>Bacteria</taxon>
        <taxon>Pseudomonadati</taxon>
        <taxon>Pseudomonadota</taxon>
        <taxon>Gammaproteobacteria</taxon>
        <taxon>Enterobacterales</taxon>
        <taxon>Enterobacteriaceae</taxon>
        <taxon>Salmonella</taxon>
    </lineage>
</organism>
<sequence>MNYTLSKRLCLTAMLTLAAVVYTTSAFAETSKLVIESGDSAQSRQEAAMEKEQWNDTRSLRQKVNTRAEKEWDKADAAFDNRDKCEQSANINAYWEPNTLRCLDRRTGRVITP</sequence>
<feature type="signal peptide" evidence="1">
    <location>
        <begin position="1"/>
        <end position="28"/>
    </location>
</feature>
<feature type="chain" id="PRO_0000349096" description="UPF0482 protein YnfB">
    <location>
        <begin position="29"/>
        <end position="113"/>
    </location>
</feature>
<accession>A9MRN3</accession>